<sequence>MSTGFFGDIQKVRYEGPESDNPLAFRHYNADEIVLGKRMEDHLRFAVAYWHSFAWEGGDPFGGRTFDRPWFSNEIDAAKLKADVAFEFFSLLGAPYYCFHDADVRPEGRNFAENTRYLNEIVDIFEKKQAETGMKLLWGTANLFSNRRYMAGAATNPDPDVFAFAAATVKTCIDATKRLGGENYVLWGGREGYETLLNTDLSRELDHMGRFLSLVVEYKHKIGFKGTILIEPKPQEPTKHQYDYDVATVYGFLKRYGLENEVKVNIEQGHAILAGHSFEHELALARTLGIFGSIDMNRNDYQSGWDTDQFPNNVPEMALAYYQVLLAGGFTTGGTNFDAKLRRQSLDPQDLLIGHIGGMDCCARGLKAAARMLEDGALSKPLDERYAGWNGEFGKRLLSGLSLDQIAGEVEAKDINPQPKSGRQEYLENIVNRYV</sequence>
<name>XYLA_BRUMB</name>
<organism>
    <name type="scientific">Brucella melitensis biotype 2 (strain ATCC 23457)</name>
    <dbReference type="NCBI Taxonomy" id="546272"/>
    <lineage>
        <taxon>Bacteria</taxon>
        <taxon>Pseudomonadati</taxon>
        <taxon>Pseudomonadota</taxon>
        <taxon>Alphaproteobacteria</taxon>
        <taxon>Hyphomicrobiales</taxon>
        <taxon>Brucellaceae</taxon>
        <taxon>Brucella/Ochrobactrum group</taxon>
        <taxon>Brucella</taxon>
    </lineage>
</organism>
<dbReference type="EC" id="5.3.1.5" evidence="1"/>
<dbReference type="EMBL" id="CP001488">
    <property type="protein sequence ID" value="ACO00358.1"/>
    <property type="molecule type" value="Genomic_DNA"/>
</dbReference>
<dbReference type="RefSeq" id="WP_002966715.1">
    <property type="nucleotide sequence ID" value="NC_012441.1"/>
</dbReference>
<dbReference type="SMR" id="C0RHQ0"/>
<dbReference type="GeneID" id="97534105"/>
<dbReference type="KEGG" id="bmi:BMEA_A0585"/>
<dbReference type="HOGENOM" id="CLU_037261_1_0_5"/>
<dbReference type="Proteomes" id="UP000001748">
    <property type="component" value="Chromosome I"/>
</dbReference>
<dbReference type="GO" id="GO:0005737">
    <property type="term" value="C:cytoplasm"/>
    <property type="evidence" value="ECO:0007669"/>
    <property type="project" value="UniProtKB-SubCell"/>
</dbReference>
<dbReference type="GO" id="GO:0000287">
    <property type="term" value="F:magnesium ion binding"/>
    <property type="evidence" value="ECO:0007669"/>
    <property type="project" value="UniProtKB-UniRule"/>
</dbReference>
<dbReference type="GO" id="GO:0009045">
    <property type="term" value="F:xylose isomerase activity"/>
    <property type="evidence" value="ECO:0007669"/>
    <property type="project" value="UniProtKB-UniRule"/>
</dbReference>
<dbReference type="GO" id="GO:0042732">
    <property type="term" value="P:D-xylose metabolic process"/>
    <property type="evidence" value="ECO:0007669"/>
    <property type="project" value="UniProtKB-UniRule"/>
</dbReference>
<dbReference type="FunFam" id="3.20.20.150:FF:000002">
    <property type="entry name" value="Xylose isomerase"/>
    <property type="match status" value="1"/>
</dbReference>
<dbReference type="Gene3D" id="3.20.20.150">
    <property type="entry name" value="Divalent-metal-dependent TIM barrel enzymes"/>
    <property type="match status" value="1"/>
</dbReference>
<dbReference type="HAMAP" id="MF_00455">
    <property type="entry name" value="Xylose_isom_A"/>
    <property type="match status" value="1"/>
</dbReference>
<dbReference type="InterPro" id="IPR036237">
    <property type="entry name" value="Xyl_isomerase-like_sf"/>
</dbReference>
<dbReference type="InterPro" id="IPR013452">
    <property type="entry name" value="Xylose_isom_bac"/>
</dbReference>
<dbReference type="InterPro" id="IPR001998">
    <property type="entry name" value="Xylose_isomerase"/>
</dbReference>
<dbReference type="NCBIfam" id="NF003998">
    <property type="entry name" value="PRK05474.1"/>
    <property type="match status" value="1"/>
</dbReference>
<dbReference type="NCBIfam" id="TIGR02630">
    <property type="entry name" value="xylose_isom_A"/>
    <property type="match status" value="1"/>
</dbReference>
<dbReference type="PANTHER" id="PTHR48408">
    <property type="match status" value="1"/>
</dbReference>
<dbReference type="PANTHER" id="PTHR48408:SF1">
    <property type="entry name" value="XYLOSE ISOMERASE"/>
    <property type="match status" value="1"/>
</dbReference>
<dbReference type="PRINTS" id="PR00688">
    <property type="entry name" value="XYLOSISMRASE"/>
</dbReference>
<dbReference type="SUPFAM" id="SSF51658">
    <property type="entry name" value="Xylose isomerase-like"/>
    <property type="match status" value="1"/>
</dbReference>
<dbReference type="PROSITE" id="PS51415">
    <property type="entry name" value="XYLOSE_ISOMERASE"/>
    <property type="match status" value="1"/>
</dbReference>
<keyword id="KW-0119">Carbohydrate metabolism</keyword>
<keyword id="KW-0963">Cytoplasm</keyword>
<keyword id="KW-0413">Isomerase</keyword>
<keyword id="KW-0460">Magnesium</keyword>
<keyword id="KW-0479">Metal-binding</keyword>
<keyword id="KW-0859">Xylose metabolism</keyword>
<proteinExistence type="inferred from homology"/>
<protein>
    <recommendedName>
        <fullName evidence="1">Xylose isomerase</fullName>
        <ecNumber evidence="1">5.3.1.5</ecNumber>
    </recommendedName>
</protein>
<evidence type="ECO:0000255" key="1">
    <source>
        <dbReference type="HAMAP-Rule" id="MF_00455"/>
    </source>
</evidence>
<accession>C0RHQ0</accession>
<feature type="chain" id="PRO_1000200280" description="Xylose isomerase">
    <location>
        <begin position="1"/>
        <end position="435"/>
    </location>
</feature>
<feature type="binding site" evidence="1">
    <location>
        <position position="306"/>
    </location>
    <ligand>
        <name>Mg(2+)</name>
        <dbReference type="ChEBI" id="CHEBI:18420"/>
        <label>2</label>
    </ligand>
</feature>
<feature type="binding site" evidence="1">
    <location>
        <position position="308"/>
    </location>
    <ligand>
        <name>Mg(2+)</name>
        <dbReference type="ChEBI" id="CHEBI:18420"/>
        <label>2</label>
    </ligand>
</feature>
<reference key="1">
    <citation type="submission" date="2009-03" db="EMBL/GenBank/DDBJ databases">
        <title>Brucella melitensis ATCC 23457 whole genome shotgun sequencing project.</title>
        <authorList>
            <person name="Setubal J.C."/>
            <person name="Boyle S."/>
            <person name="Crasta O.R."/>
            <person name="Gillespie J.J."/>
            <person name="Kenyon R.W."/>
            <person name="Lu J."/>
            <person name="Mane S."/>
            <person name="Nagrani S."/>
            <person name="Shallom J.M."/>
            <person name="Shallom S."/>
            <person name="Shukla M."/>
            <person name="Snyder E.E."/>
            <person name="Sobral B.W."/>
            <person name="Wattam A.R."/>
            <person name="Will R."/>
            <person name="Williams K."/>
            <person name="Yoo H."/>
            <person name="Munk C."/>
            <person name="Tapia R."/>
            <person name="Han C."/>
            <person name="Detter J.C."/>
            <person name="Bruce D."/>
            <person name="Brettin T.S."/>
        </authorList>
    </citation>
    <scope>NUCLEOTIDE SEQUENCE [LARGE SCALE GENOMIC DNA]</scope>
    <source>
        <strain>ATCC 23457</strain>
    </source>
</reference>
<gene>
    <name evidence="1" type="primary">xylA</name>
    <name type="ordered locus">BMEA_A0585</name>
</gene>
<comment type="catalytic activity">
    <reaction evidence="1">
        <text>alpha-D-xylose = alpha-D-xylulofuranose</text>
        <dbReference type="Rhea" id="RHEA:22816"/>
        <dbReference type="ChEBI" id="CHEBI:28518"/>
        <dbReference type="ChEBI" id="CHEBI:188998"/>
        <dbReference type="EC" id="5.3.1.5"/>
    </reaction>
</comment>
<comment type="cofactor">
    <cofactor evidence="1">
        <name>Mg(2+)</name>
        <dbReference type="ChEBI" id="CHEBI:18420"/>
    </cofactor>
    <text evidence="1">Binds 2 magnesium ions per subunit.</text>
</comment>
<comment type="subunit">
    <text evidence="1">Homotetramer.</text>
</comment>
<comment type="subcellular location">
    <subcellularLocation>
        <location evidence="1">Cytoplasm</location>
    </subcellularLocation>
</comment>
<comment type="similarity">
    <text evidence="1">Belongs to the xylose isomerase family.</text>
</comment>